<feature type="chain" id="PRO_0000227325" description="UvrABC system protein B">
    <location>
        <begin position="1"/>
        <end position="663"/>
    </location>
</feature>
<feature type="domain" description="Helicase ATP-binding" evidence="1">
    <location>
        <begin position="26"/>
        <end position="414"/>
    </location>
</feature>
<feature type="domain" description="Helicase C-terminal" evidence="1">
    <location>
        <begin position="430"/>
        <end position="596"/>
    </location>
</feature>
<feature type="domain" description="UVR" evidence="1">
    <location>
        <begin position="624"/>
        <end position="659"/>
    </location>
</feature>
<feature type="short sequence motif" description="Beta-hairpin">
    <location>
        <begin position="92"/>
        <end position="115"/>
    </location>
</feature>
<feature type="binding site" evidence="1">
    <location>
        <begin position="39"/>
        <end position="46"/>
    </location>
    <ligand>
        <name>ATP</name>
        <dbReference type="ChEBI" id="CHEBI:30616"/>
    </ligand>
</feature>
<comment type="function">
    <text evidence="1">The UvrABC repair system catalyzes the recognition and processing of DNA lesions. A damage recognition complex composed of 2 UvrA and 2 UvrB subunits scans DNA for abnormalities. Upon binding of the UvrA(2)B(2) complex to a putative damaged site, the DNA wraps around one UvrB monomer. DNA wrap is dependent on ATP binding by UvrB and probably causes local melting of the DNA helix, facilitating insertion of UvrB beta-hairpin between the DNA strands. Then UvrB probes one DNA strand for the presence of a lesion. If a lesion is found the UvrA subunits dissociate and the UvrB-DNA preincision complex is formed. This complex is subsequently bound by UvrC and the second UvrB is released. If no lesion is found, the DNA wraps around the other UvrB subunit that will check the other stand for damage.</text>
</comment>
<comment type="subunit">
    <text evidence="1">Forms a heterotetramer with UvrA during the search for lesions. Interacts with UvrC in an incision complex.</text>
</comment>
<comment type="subcellular location">
    <subcellularLocation>
        <location evidence="1">Cytoplasm</location>
    </subcellularLocation>
</comment>
<comment type="domain">
    <text evidence="1">The beta-hairpin motif is involved in DNA binding.</text>
</comment>
<comment type="similarity">
    <text evidence="1">Belongs to the UvrB family.</text>
</comment>
<accession>Q5X906</accession>
<reference key="1">
    <citation type="journal article" date="2004" name="Nat. Genet.">
        <title>Evidence in the Legionella pneumophila genome for exploitation of host cell functions and high genome plasticity.</title>
        <authorList>
            <person name="Cazalet C."/>
            <person name="Rusniok C."/>
            <person name="Brueggemann H."/>
            <person name="Zidane N."/>
            <person name="Magnier A."/>
            <person name="Ma L."/>
            <person name="Tichit M."/>
            <person name="Jarraud S."/>
            <person name="Bouchier C."/>
            <person name="Vandenesch F."/>
            <person name="Kunst F."/>
            <person name="Etienne J."/>
            <person name="Glaser P."/>
            <person name="Buchrieser C."/>
        </authorList>
    </citation>
    <scope>NUCLEOTIDE SEQUENCE [LARGE SCALE GENOMIC DNA]</scope>
    <source>
        <strain>Paris</strain>
    </source>
</reference>
<keyword id="KW-0067">ATP-binding</keyword>
<keyword id="KW-0963">Cytoplasm</keyword>
<keyword id="KW-0227">DNA damage</keyword>
<keyword id="KW-0228">DNA excision</keyword>
<keyword id="KW-0234">DNA repair</keyword>
<keyword id="KW-0267">Excision nuclease</keyword>
<keyword id="KW-0547">Nucleotide-binding</keyword>
<keyword id="KW-0742">SOS response</keyword>
<sequence>MKDLFKIYSNYQPAGDQPTAIASLIDGLESGLAKQTLLGVTGSGKTFTIAHVIQAMKRPTLIMAPNKTLAAQLYGEFKAFFPDNAVEYFVSYYDYYQPEAYVPASDTFIEKDASINEHIEQMRLSATKALIERKDAIIVATVSAIYGLGDPDSYLRMLLHLSRGEQSDQRKILKRLAEMQYTRTNLSLERGQFRVHGDVIDIFPADSEKEAIRIELFDDEVDNIARFDPLTGEILQRLPRVTIFPKTHYVTPRERILETVEKVKVELQERLAELNAQNKLVEAQRLEQRTCFDIEMMLELGYCSGIENYSRYLSNREAGEAPPTLFDYLPPEALLIIDESHVTVPQIGGMYRGDRARKETLVNYGFRLPSALDNRPLRFEEFEERSPQTIYISATPGPYEQEHSDNVAEQVVRPTGLIDPEVEIRPVKTQVDDLMSEIRQVIAQGSRILVTTLTKRMAEDLTEYLSEHGIKVRYLHSDVDTVERMEIIRDLRLGEFDVLVGINLLREGLDMPEVALVAILDADKEGFLRSERSLIQTIGRAARNVKGRAILYADTMTGSMQRALTETERRREKQKAFNLKHGITPKGINKSVEDILEGAYIGKRKTMVAEQAPRYTHWSPQELAKEINALEKQMYAHAQNMEFELAAKIRDEYLLLKEQLMKI</sequence>
<proteinExistence type="inferred from homology"/>
<name>UVRB_LEGPA</name>
<dbReference type="EMBL" id="CR628336">
    <property type="protein sequence ID" value="CAH11234.1"/>
    <property type="molecule type" value="Genomic_DNA"/>
</dbReference>
<dbReference type="RefSeq" id="WP_011212728.1">
    <property type="nucleotide sequence ID" value="NC_006368.1"/>
</dbReference>
<dbReference type="SMR" id="Q5X906"/>
<dbReference type="KEGG" id="lpp:lpp0086"/>
<dbReference type="LegioList" id="lpp0086"/>
<dbReference type="HOGENOM" id="CLU_009621_2_1_6"/>
<dbReference type="GO" id="GO:0005737">
    <property type="term" value="C:cytoplasm"/>
    <property type="evidence" value="ECO:0007669"/>
    <property type="project" value="UniProtKB-SubCell"/>
</dbReference>
<dbReference type="GO" id="GO:0009380">
    <property type="term" value="C:excinuclease repair complex"/>
    <property type="evidence" value="ECO:0007669"/>
    <property type="project" value="InterPro"/>
</dbReference>
<dbReference type="GO" id="GO:0005524">
    <property type="term" value="F:ATP binding"/>
    <property type="evidence" value="ECO:0007669"/>
    <property type="project" value="UniProtKB-UniRule"/>
</dbReference>
<dbReference type="GO" id="GO:0016887">
    <property type="term" value="F:ATP hydrolysis activity"/>
    <property type="evidence" value="ECO:0007669"/>
    <property type="project" value="InterPro"/>
</dbReference>
<dbReference type="GO" id="GO:0003677">
    <property type="term" value="F:DNA binding"/>
    <property type="evidence" value="ECO:0007669"/>
    <property type="project" value="UniProtKB-UniRule"/>
</dbReference>
<dbReference type="GO" id="GO:0009381">
    <property type="term" value="F:excinuclease ABC activity"/>
    <property type="evidence" value="ECO:0007669"/>
    <property type="project" value="UniProtKB-UniRule"/>
</dbReference>
<dbReference type="GO" id="GO:0006289">
    <property type="term" value="P:nucleotide-excision repair"/>
    <property type="evidence" value="ECO:0007669"/>
    <property type="project" value="UniProtKB-UniRule"/>
</dbReference>
<dbReference type="GO" id="GO:0009432">
    <property type="term" value="P:SOS response"/>
    <property type="evidence" value="ECO:0007669"/>
    <property type="project" value="UniProtKB-UniRule"/>
</dbReference>
<dbReference type="CDD" id="cd17916">
    <property type="entry name" value="DEXHc_UvrB"/>
    <property type="match status" value="1"/>
</dbReference>
<dbReference type="CDD" id="cd18790">
    <property type="entry name" value="SF2_C_UvrB"/>
    <property type="match status" value="1"/>
</dbReference>
<dbReference type="FunFam" id="3.40.50.300:FF:000477">
    <property type="entry name" value="UvrABC system protein B"/>
    <property type="match status" value="1"/>
</dbReference>
<dbReference type="Gene3D" id="6.10.140.240">
    <property type="match status" value="1"/>
</dbReference>
<dbReference type="Gene3D" id="3.40.50.300">
    <property type="entry name" value="P-loop containing nucleotide triphosphate hydrolases"/>
    <property type="match status" value="3"/>
</dbReference>
<dbReference type="Gene3D" id="4.10.860.10">
    <property type="entry name" value="UVR domain"/>
    <property type="match status" value="1"/>
</dbReference>
<dbReference type="HAMAP" id="MF_00204">
    <property type="entry name" value="UvrB"/>
    <property type="match status" value="1"/>
</dbReference>
<dbReference type="InterPro" id="IPR006935">
    <property type="entry name" value="Helicase/UvrB_N"/>
</dbReference>
<dbReference type="InterPro" id="IPR014001">
    <property type="entry name" value="Helicase_ATP-bd"/>
</dbReference>
<dbReference type="InterPro" id="IPR001650">
    <property type="entry name" value="Helicase_C-like"/>
</dbReference>
<dbReference type="InterPro" id="IPR027417">
    <property type="entry name" value="P-loop_NTPase"/>
</dbReference>
<dbReference type="InterPro" id="IPR001943">
    <property type="entry name" value="UVR_dom"/>
</dbReference>
<dbReference type="InterPro" id="IPR036876">
    <property type="entry name" value="UVR_dom_sf"/>
</dbReference>
<dbReference type="InterPro" id="IPR004807">
    <property type="entry name" value="UvrB"/>
</dbReference>
<dbReference type="InterPro" id="IPR041471">
    <property type="entry name" value="UvrB_inter"/>
</dbReference>
<dbReference type="InterPro" id="IPR024759">
    <property type="entry name" value="UvrB_YAD/RRR_dom"/>
</dbReference>
<dbReference type="NCBIfam" id="NF003673">
    <property type="entry name" value="PRK05298.1"/>
    <property type="match status" value="1"/>
</dbReference>
<dbReference type="NCBIfam" id="TIGR00631">
    <property type="entry name" value="uvrb"/>
    <property type="match status" value="1"/>
</dbReference>
<dbReference type="PANTHER" id="PTHR24029">
    <property type="entry name" value="UVRABC SYSTEM PROTEIN B"/>
    <property type="match status" value="1"/>
</dbReference>
<dbReference type="PANTHER" id="PTHR24029:SF0">
    <property type="entry name" value="UVRABC SYSTEM PROTEIN B"/>
    <property type="match status" value="1"/>
</dbReference>
<dbReference type="Pfam" id="PF00271">
    <property type="entry name" value="Helicase_C"/>
    <property type="match status" value="1"/>
</dbReference>
<dbReference type="Pfam" id="PF04851">
    <property type="entry name" value="ResIII"/>
    <property type="match status" value="1"/>
</dbReference>
<dbReference type="Pfam" id="PF02151">
    <property type="entry name" value="UVR"/>
    <property type="match status" value="1"/>
</dbReference>
<dbReference type="Pfam" id="PF12344">
    <property type="entry name" value="UvrB"/>
    <property type="match status" value="1"/>
</dbReference>
<dbReference type="Pfam" id="PF17757">
    <property type="entry name" value="UvrB_inter"/>
    <property type="match status" value="1"/>
</dbReference>
<dbReference type="SMART" id="SM00487">
    <property type="entry name" value="DEXDc"/>
    <property type="match status" value="1"/>
</dbReference>
<dbReference type="SMART" id="SM00490">
    <property type="entry name" value="HELICc"/>
    <property type="match status" value="1"/>
</dbReference>
<dbReference type="SUPFAM" id="SSF46600">
    <property type="entry name" value="C-terminal UvrC-binding domain of UvrB"/>
    <property type="match status" value="1"/>
</dbReference>
<dbReference type="SUPFAM" id="SSF52540">
    <property type="entry name" value="P-loop containing nucleoside triphosphate hydrolases"/>
    <property type="match status" value="2"/>
</dbReference>
<dbReference type="PROSITE" id="PS51192">
    <property type="entry name" value="HELICASE_ATP_BIND_1"/>
    <property type="match status" value="1"/>
</dbReference>
<dbReference type="PROSITE" id="PS51194">
    <property type="entry name" value="HELICASE_CTER"/>
    <property type="match status" value="1"/>
</dbReference>
<dbReference type="PROSITE" id="PS50151">
    <property type="entry name" value="UVR"/>
    <property type="match status" value="1"/>
</dbReference>
<gene>
    <name evidence="1" type="primary">uvrB</name>
    <name type="ordered locus">lpp0086</name>
</gene>
<evidence type="ECO:0000255" key="1">
    <source>
        <dbReference type="HAMAP-Rule" id="MF_00204"/>
    </source>
</evidence>
<protein>
    <recommendedName>
        <fullName evidence="1">UvrABC system protein B</fullName>
        <shortName evidence="1">Protein UvrB</shortName>
    </recommendedName>
    <alternativeName>
        <fullName evidence="1">Excinuclease ABC subunit B</fullName>
    </alternativeName>
</protein>
<organism>
    <name type="scientific">Legionella pneumophila (strain Paris)</name>
    <dbReference type="NCBI Taxonomy" id="297246"/>
    <lineage>
        <taxon>Bacteria</taxon>
        <taxon>Pseudomonadati</taxon>
        <taxon>Pseudomonadota</taxon>
        <taxon>Gammaproteobacteria</taxon>
        <taxon>Legionellales</taxon>
        <taxon>Legionellaceae</taxon>
        <taxon>Legionella</taxon>
    </lineage>
</organism>